<protein>
    <recommendedName>
        <fullName>Cytochrome c oxidase subunit 3</fullName>
        <ecNumber>7.1.1.9</ecNumber>
    </recommendedName>
    <alternativeName>
        <fullName>Caa-3605 subunit 3</fullName>
    </alternativeName>
    <alternativeName>
        <fullName>Cytochrome aa3 subunit 3</fullName>
    </alternativeName>
    <alternativeName>
        <fullName>Cytochrome c oxidase polypeptide III</fullName>
    </alternativeName>
    <alternativeName>
        <fullName>Oxidase aa(3) subunit 3</fullName>
    </alternativeName>
</protein>
<reference key="1">
    <citation type="journal article" date="1991" name="Eur. J. Biochem.">
        <title>The Bacillus subtilis cytochrome-c oxidase. Variations on a conserved protein theme.</title>
        <authorList>
            <person name="Saraste M."/>
            <person name="Metso T."/>
            <person name="Nakari T."/>
            <person name="Jalli T."/>
            <person name="Lauraeus M."/>
            <person name="van der Oost J."/>
        </authorList>
    </citation>
    <scope>NUCLEOTIDE SEQUENCE [GENOMIC DNA]</scope>
    <source>
        <strain>168</strain>
    </source>
</reference>
<reference key="2">
    <citation type="submission" date="1997-08" db="EMBL/GenBank/DDBJ databases">
        <title>Bacillus subtilis chromosomal region downstream nprE.</title>
        <authorList>
            <person name="Bertero M."/>
            <person name="Presecan E."/>
            <person name="Glaser P."/>
            <person name="Richou A."/>
            <person name="Danchin A."/>
        </authorList>
    </citation>
    <scope>NUCLEOTIDE SEQUENCE [GENOMIC DNA]</scope>
    <source>
        <strain>168</strain>
    </source>
</reference>
<reference key="3">
    <citation type="journal article" date="1997" name="Nature">
        <title>The complete genome sequence of the Gram-positive bacterium Bacillus subtilis.</title>
        <authorList>
            <person name="Kunst F."/>
            <person name="Ogasawara N."/>
            <person name="Moszer I."/>
            <person name="Albertini A.M."/>
            <person name="Alloni G."/>
            <person name="Azevedo V."/>
            <person name="Bertero M.G."/>
            <person name="Bessieres P."/>
            <person name="Bolotin A."/>
            <person name="Borchert S."/>
            <person name="Borriss R."/>
            <person name="Boursier L."/>
            <person name="Brans A."/>
            <person name="Braun M."/>
            <person name="Brignell S.C."/>
            <person name="Bron S."/>
            <person name="Brouillet S."/>
            <person name="Bruschi C.V."/>
            <person name="Caldwell B."/>
            <person name="Capuano V."/>
            <person name="Carter N.M."/>
            <person name="Choi S.-K."/>
            <person name="Codani J.-J."/>
            <person name="Connerton I.F."/>
            <person name="Cummings N.J."/>
            <person name="Daniel R.A."/>
            <person name="Denizot F."/>
            <person name="Devine K.M."/>
            <person name="Duesterhoeft A."/>
            <person name="Ehrlich S.D."/>
            <person name="Emmerson P.T."/>
            <person name="Entian K.-D."/>
            <person name="Errington J."/>
            <person name="Fabret C."/>
            <person name="Ferrari E."/>
            <person name="Foulger D."/>
            <person name="Fritz C."/>
            <person name="Fujita M."/>
            <person name="Fujita Y."/>
            <person name="Fuma S."/>
            <person name="Galizzi A."/>
            <person name="Galleron N."/>
            <person name="Ghim S.-Y."/>
            <person name="Glaser P."/>
            <person name="Goffeau A."/>
            <person name="Golightly E.J."/>
            <person name="Grandi G."/>
            <person name="Guiseppi G."/>
            <person name="Guy B.J."/>
            <person name="Haga K."/>
            <person name="Haiech J."/>
            <person name="Harwood C.R."/>
            <person name="Henaut A."/>
            <person name="Hilbert H."/>
            <person name="Holsappel S."/>
            <person name="Hosono S."/>
            <person name="Hullo M.-F."/>
            <person name="Itaya M."/>
            <person name="Jones L.-M."/>
            <person name="Joris B."/>
            <person name="Karamata D."/>
            <person name="Kasahara Y."/>
            <person name="Klaerr-Blanchard M."/>
            <person name="Klein C."/>
            <person name="Kobayashi Y."/>
            <person name="Koetter P."/>
            <person name="Koningstein G."/>
            <person name="Krogh S."/>
            <person name="Kumano M."/>
            <person name="Kurita K."/>
            <person name="Lapidus A."/>
            <person name="Lardinois S."/>
            <person name="Lauber J."/>
            <person name="Lazarevic V."/>
            <person name="Lee S.-M."/>
            <person name="Levine A."/>
            <person name="Liu H."/>
            <person name="Masuda S."/>
            <person name="Mauel C."/>
            <person name="Medigue C."/>
            <person name="Medina N."/>
            <person name="Mellado R.P."/>
            <person name="Mizuno M."/>
            <person name="Moestl D."/>
            <person name="Nakai S."/>
            <person name="Noback M."/>
            <person name="Noone D."/>
            <person name="O'Reilly M."/>
            <person name="Ogawa K."/>
            <person name="Ogiwara A."/>
            <person name="Oudega B."/>
            <person name="Park S.-H."/>
            <person name="Parro V."/>
            <person name="Pohl T.M."/>
            <person name="Portetelle D."/>
            <person name="Porwollik S."/>
            <person name="Prescott A.M."/>
            <person name="Presecan E."/>
            <person name="Pujic P."/>
            <person name="Purnelle B."/>
            <person name="Rapoport G."/>
            <person name="Rey M."/>
            <person name="Reynolds S."/>
            <person name="Rieger M."/>
            <person name="Rivolta C."/>
            <person name="Rocha E."/>
            <person name="Roche B."/>
            <person name="Rose M."/>
            <person name="Sadaie Y."/>
            <person name="Sato T."/>
            <person name="Scanlan E."/>
            <person name="Schleich S."/>
            <person name="Schroeter R."/>
            <person name="Scoffone F."/>
            <person name="Sekiguchi J."/>
            <person name="Sekowska A."/>
            <person name="Seror S.J."/>
            <person name="Serror P."/>
            <person name="Shin B.-S."/>
            <person name="Soldo B."/>
            <person name="Sorokin A."/>
            <person name="Tacconi E."/>
            <person name="Takagi T."/>
            <person name="Takahashi H."/>
            <person name="Takemaru K."/>
            <person name="Takeuchi M."/>
            <person name="Tamakoshi A."/>
            <person name="Tanaka T."/>
            <person name="Terpstra P."/>
            <person name="Tognoni A."/>
            <person name="Tosato V."/>
            <person name="Uchiyama S."/>
            <person name="Vandenbol M."/>
            <person name="Vannier F."/>
            <person name="Vassarotti A."/>
            <person name="Viari A."/>
            <person name="Wambutt R."/>
            <person name="Wedler E."/>
            <person name="Wedler H."/>
            <person name="Weitzenegger T."/>
            <person name="Winters P."/>
            <person name="Wipat A."/>
            <person name="Yamamoto H."/>
            <person name="Yamane K."/>
            <person name="Yasumoto K."/>
            <person name="Yata K."/>
            <person name="Yoshida K."/>
            <person name="Yoshikawa H.-F."/>
            <person name="Zumstein E."/>
            <person name="Yoshikawa H."/>
            <person name="Danchin A."/>
        </authorList>
    </citation>
    <scope>NUCLEOTIDE SEQUENCE [LARGE SCALE GENOMIC DNA]</scope>
    <source>
        <strain>168</strain>
    </source>
</reference>
<gene>
    <name type="primary">ctaE</name>
    <name type="ordered locus">BSU14910</name>
</gene>
<name>COX3_BACSU</name>
<dbReference type="EC" id="7.1.1.9"/>
<dbReference type="EMBL" id="X54140">
    <property type="protein sequence ID" value="CAA38078.1"/>
    <property type="molecule type" value="Genomic_DNA"/>
</dbReference>
<dbReference type="EMBL" id="Z98682">
    <property type="protein sequence ID" value="CAB11344.1"/>
    <property type="molecule type" value="Genomic_DNA"/>
</dbReference>
<dbReference type="EMBL" id="AL009126">
    <property type="protein sequence ID" value="CAB13364.1"/>
    <property type="molecule type" value="Genomic_DNA"/>
</dbReference>
<dbReference type="PIR" id="F69609">
    <property type="entry name" value="F69609"/>
</dbReference>
<dbReference type="RefSeq" id="NP_389374.1">
    <property type="nucleotide sequence ID" value="NC_000964.3"/>
</dbReference>
<dbReference type="RefSeq" id="WP_003232244.1">
    <property type="nucleotide sequence ID" value="NZ_OZ025638.1"/>
</dbReference>
<dbReference type="SMR" id="P24012"/>
<dbReference type="FunCoup" id="P24012">
    <property type="interactions" value="242"/>
</dbReference>
<dbReference type="STRING" id="224308.BSU14910"/>
<dbReference type="TCDB" id="3.D.4.4.1">
    <property type="family name" value="the proton-translocating cytochrome oxidase (cox) superfamily"/>
</dbReference>
<dbReference type="PaxDb" id="224308-BSU14910"/>
<dbReference type="EnsemblBacteria" id="CAB13364">
    <property type="protein sequence ID" value="CAB13364"/>
    <property type="gene ID" value="BSU_14910"/>
</dbReference>
<dbReference type="GeneID" id="935993"/>
<dbReference type="KEGG" id="bsu:BSU14910"/>
<dbReference type="PATRIC" id="fig|224308.179.peg.1626"/>
<dbReference type="eggNOG" id="COG1845">
    <property type="taxonomic scope" value="Bacteria"/>
</dbReference>
<dbReference type="InParanoid" id="P24012"/>
<dbReference type="OrthoDB" id="9810850at2"/>
<dbReference type="PhylomeDB" id="P24012"/>
<dbReference type="BioCyc" id="BSUB:BSU14910-MONOMER"/>
<dbReference type="BioCyc" id="MetaCyc:BSU14910-MONOMER"/>
<dbReference type="SABIO-RK" id="P24012"/>
<dbReference type="Proteomes" id="UP000001570">
    <property type="component" value="Chromosome"/>
</dbReference>
<dbReference type="GO" id="GO:0005886">
    <property type="term" value="C:plasma membrane"/>
    <property type="evidence" value="ECO:0007669"/>
    <property type="project" value="UniProtKB-SubCell"/>
</dbReference>
<dbReference type="GO" id="GO:0004129">
    <property type="term" value="F:cytochrome-c oxidase activity"/>
    <property type="evidence" value="ECO:0007669"/>
    <property type="project" value="UniProtKB-EC"/>
</dbReference>
<dbReference type="GO" id="GO:0019646">
    <property type="term" value="P:aerobic electron transport chain"/>
    <property type="evidence" value="ECO:0007669"/>
    <property type="project" value="InterPro"/>
</dbReference>
<dbReference type="GO" id="GO:0009060">
    <property type="term" value="P:aerobic respiration"/>
    <property type="evidence" value="ECO:0000318"/>
    <property type="project" value="GO_Central"/>
</dbReference>
<dbReference type="CDD" id="cd02863">
    <property type="entry name" value="Ubiquinol_oxidase_III"/>
    <property type="match status" value="1"/>
</dbReference>
<dbReference type="FunFam" id="1.20.120.80:FF:000001">
    <property type="entry name" value="Cytochrome (Ubi)quinol oxidase subunit III"/>
    <property type="match status" value="1"/>
</dbReference>
<dbReference type="Gene3D" id="1.20.120.80">
    <property type="entry name" value="Cytochrome c oxidase, subunit III, four-helix bundle"/>
    <property type="match status" value="1"/>
</dbReference>
<dbReference type="InterPro" id="IPR024791">
    <property type="entry name" value="Cyt_c/ubiquinol_Oxase_su3"/>
</dbReference>
<dbReference type="InterPro" id="IPR000298">
    <property type="entry name" value="Cyt_c_oxidase-like_su3"/>
</dbReference>
<dbReference type="InterPro" id="IPR035973">
    <property type="entry name" value="Cyt_c_oxidase_su3-like_sf"/>
</dbReference>
<dbReference type="InterPro" id="IPR013833">
    <property type="entry name" value="Cyt_c_oxidase_su3_a-hlx"/>
</dbReference>
<dbReference type="InterPro" id="IPR033946">
    <property type="entry name" value="Ubiquinol_oxase_su3_dom"/>
</dbReference>
<dbReference type="PANTHER" id="PTHR11403:SF9">
    <property type="entry name" value="CYTOCHROME C OXIDASE SUBUNIT 3"/>
    <property type="match status" value="1"/>
</dbReference>
<dbReference type="PANTHER" id="PTHR11403">
    <property type="entry name" value="CYTOCHROME C OXIDASE SUBUNIT III"/>
    <property type="match status" value="1"/>
</dbReference>
<dbReference type="Pfam" id="PF00510">
    <property type="entry name" value="COX3"/>
    <property type="match status" value="1"/>
</dbReference>
<dbReference type="SUPFAM" id="SSF81452">
    <property type="entry name" value="Cytochrome c oxidase subunit III-like"/>
    <property type="match status" value="1"/>
</dbReference>
<dbReference type="PROSITE" id="PS50253">
    <property type="entry name" value="COX3"/>
    <property type="match status" value="1"/>
</dbReference>
<proteinExistence type="inferred from homology"/>
<evidence type="ECO:0000255" key="1"/>
<evidence type="ECO:0000305" key="2"/>
<feature type="chain" id="PRO_0000183877" description="Cytochrome c oxidase subunit 3">
    <location>
        <begin position="1"/>
        <end position="207"/>
    </location>
</feature>
<feature type="transmembrane region" description="Helical" evidence="1">
    <location>
        <begin position="30"/>
        <end position="50"/>
    </location>
</feature>
<feature type="transmembrane region" description="Helical" evidence="1">
    <location>
        <begin position="67"/>
        <end position="87"/>
    </location>
</feature>
<feature type="transmembrane region" description="Helical" evidence="1">
    <location>
        <begin position="101"/>
        <end position="121"/>
    </location>
</feature>
<feature type="transmembrane region" description="Helical" evidence="1">
    <location>
        <begin position="144"/>
        <end position="164"/>
    </location>
</feature>
<feature type="transmembrane region" description="Helical" evidence="1">
    <location>
        <begin position="186"/>
        <end position="206"/>
    </location>
</feature>
<feature type="sequence conflict" description="In Ref. 1; CAA38078." evidence="2" ref="1">
    <original>K</original>
    <variation>N</variation>
    <location>
        <position position="26"/>
    </location>
</feature>
<feature type="sequence conflict" description="In Ref. 1; CAA38078." evidence="2" ref="1">
    <original>LR</original>
    <variation>AS</variation>
    <location>
        <begin position="51"/>
        <end position="52"/>
    </location>
</feature>
<organism>
    <name type="scientific">Bacillus subtilis (strain 168)</name>
    <dbReference type="NCBI Taxonomy" id="224308"/>
    <lineage>
        <taxon>Bacteria</taxon>
        <taxon>Bacillati</taxon>
        <taxon>Bacillota</taxon>
        <taxon>Bacilli</taxon>
        <taxon>Bacillales</taxon>
        <taxon>Bacillaceae</taxon>
        <taxon>Bacillus</taxon>
    </lineage>
</organism>
<keyword id="KW-1003">Cell membrane</keyword>
<keyword id="KW-0472">Membrane</keyword>
<keyword id="KW-1185">Reference proteome</keyword>
<keyword id="KW-1278">Translocase</keyword>
<keyword id="KW-0812">Transmembrane</keyword>
<keyword id="KW-1133">Transmembrane helix</keyword>
<sequence>MQVQEKFTAETFPASPEKVTLEGKNKFLGFWLFLGGETVLFASLFATFLALRNSNAGDPPTTEMFDVTLVFIATMLLLTSSLTSVYAMYHMKNFSFGKMQLWLGITILLGAGFLGLEIYEFKHYTHEFGFTITSSALGSAFYTLVGTHGAHVAFGLMWISTLMIRNAKRGLNLYTAPKFYVASLYWHFIDVVWVFIFTVVYLMGMVG</sequence>
<accession>P24012</accession>
<accession>O34333</accession>
<comment type="catalytic activity">
    <reaction>
        <text>4 Fe(II)-[cytochrome c] + O2 + 8 H(+)(in) = 4 Fe(III)-[cytochrome c] + 2 H2O + 4 H(+)(out)</text>
        <dbReference type="Rhea" id="RHEA:11436"/>
        <dbReference type="Rhea" id="RHEA-COMP:10350"/>
        <dbReference type="Rhea" id="RHEA-COMP:14399"/>
        <dbReference type="ChEBI" id="CHEBI:15377"/>
        <dbReference type="ChEBI" id="CHEBI:15378"/>
        <dbReference type="ChEBI" id="CHEBI:15379"/>
        <dbReference type="ChEBI" id="CHEBI:29033"/>
        <dbReference type="ChEBI" id="CHEBI:29034"/>
        <dbReference type="EC" id="7.1.1.9"/>
    </reaction>
</comment>
<comment type="subcellular location">
    <subcellularLocation>
        <location>Cell membrane</location>
        <topology>Multi-pass membrane protein</topology>
    </subcellularLocation>
</comment>
<comment type="similarity">
    <text evidence="2">Belongs to the cytochrome c oxidase subunit 3 family.</text>
</comment>